<dbReference type="EC" id="2.3.2.27"/>
<dbReference type="EMBL" id="AB008264">
    <property type="protein sequence ID" value="BAB09196.1"/>
    <property type="molecule type" value="Genomic_DNA"/>
</dbReference>
<dbReference type="EMBL" id="CP002688">
    <property type="protein sequence ID" value="AED94890.1"/>
    <property type="molecule type" value="Genomic_DNA"/>
</dbReference>
<dbReference type="EMBL" id="CP002688">
    <property type="protein sequence ID" value="ANM68691.1"/>
    <property type="molecule type" value="Genomic_DNA"/>
</dbReference>
<dbReference type="EMBL" id="AF462851">
    <property type="protein sequence ID" value="AAL58938.1"/>
    <property type="molecule type" value="mRNA"/>
</dbReference>
<dbReference type="EMBL" id="BT004548">
    <property type="protein sequence ID" value="AAO42794.1"/>
    <property type="molecule type" value="mRNA"/>
</dbReference>
<dbReference type="EMBL" id="AK319077">
    <property type="protein sequence ID" value="BAH57192.1"/>
    <property type="molecule type" value="mRNA"/>
</dbReference>
<dbReference type="EMBL" id="AF079183">
    <property type="protein sequence ID" value="AAC69857.1"/>
    <property type="molecule type" value="mRNA"/>
</dbReference>
<dbReference type="PIR" id="T51859">
    <property type="entry name" value="T51859"/>
</dbReference>
<dbReference type="RefSeq" id="NP_001330419.1">
    <property type="nucleotide sequence ID" value="NM_001344467.1"/>
</dbReference>
<dbReference type="RefSeq" id="NP_199108.1">
    <property type="nucleotide sequence ID" value="NM_123659.4"/>
</dbReference>
<dbReference type="SMR" id="Q9FMM4"/>
<dbReference type="FunCoup" id="Q9FMM4">
    <property type="interactions" value="744"/>
</dbReference>
<dbReference type="IntAct" id="Q9FMM4">
    <property type="interactions" value="5"/>
</dbReference>
<dbReference type="STRING" id="3702.Q9FMM4"/>
<dbReference type="iPTMnet" id="Q9FMM4"/>
<dbReference type="PaxDb" id="3702-AT5G42940.1"/>
<dbReference type="ProteomicsDB" id="236914"/>
<dbReference type="EnsemblPlants" id="AT5G42940.1">
    <property type="protein sequence ID" value="AT5G42940.1"/>
    <property type="gene ID" value="AT5G42940"/>
</dbReference>
<dbReference type="EnsemblPlants" id="AT5G42940.2">
    <property type="protein sequence ID" value="AT5G42940.2"/>
    <property type="gene ID" value="AT5G42940"/>
</dbReference>
<dbReference type="GeneID" id="834306"/>
<dbReference type="Gramene" id="AT5G42940.1">
    <property type="protein sequence ID" value="AT5G42940.1"/>
    <property type="gene ID" value="AT5G42940"/>
</dbReference>
<dbReference type="Gramene" id="AT5G42940.2">
    <property type="protein sequence ID" value="AT5G42940.2"/>
    <property type="gene ID" value="AT5G42940"/>
</dbReference>
<dbReference type="KEGG" id="ath:AT5G42940"/>
<dbReference type="Araport" id="AT5G42940"/>
<dbReference type="TAIR" id="AT5G42940">
    <property type="gene designation" value="CTL06"/>
</dbReference>
<dbReference type="eggNOG" id="KOG0800">
    <property type="taxonomic scope" value="Eukaryota"/>
</dbReference>
<dbReference type="HOGENOM" id="CLU_024479_0_0_1"/>
<dbReference type="InParanoid" id="Q9FMM4"/>
<dbReference type="OMA" id="NANCASQ"/>
<dbReference type="PhylomeDB" id="Q9FMM4"/>
<dbReference type="UniPathway" id="UPA00143"/>
<dbReference type="PRO" id="PR:Q9FMM4"/>
<dbReference type="Proteomes" id="UP000006548">
    <property type="component" value="Chromosome 5"/>
</dbReference>
<dbReference type="ExpressionAtlas" id="Q9FMM4">
    <property type="expression patterns" value="baseline and differential"/>
</dbReference>
<dbReference type="GO" id="GO:0061630">
    <property type="term" value="F:ubiquitin protein ligase activity"/>
    <property type="evidence" value="ECO:0007669"/>
    <property type="project" value="InterPro"/>
</dbReference>
<dbReference type="GO" id="GO:0008270">
    <property type="term" value="F:zinc ion binding"/>
    <property type="evidence" value="ECO:0007669"/>
    <property type="project" value="UniProtKB-KW"/>
</dbReference>
<dbReference type="GO" id="GO:0016567">
    <property type="term" value="P:protein ubiquitination"/>
    <property type="evidence" value="ECO:0007669"/>
    <property type="project" value="UniProtKB-UniPathway"/>
</dbReference>
<dbReference type="FunFam" id="3.30.40.10:FF:000309">
    <property type="entry name" value="E3 ubiquitin-protein ligase MBR2"/>
    <property type="match status" value="1"/>
</dbReference>
<dbReference type="Gene3D" id="3.30.40.10">
    <property type="entry name" value="Zinc/RING finger domain, C3HC4 (zinc finger)"/>
    <property type="match status" value="1"/>
</dbReference>
<dbReference type="InterPro" id="IPR045191">
    <property type="entry name" value="MBR1/2-like"/>
</dbReference>
<dbReference type="InterPro" id="IPR001841">
    <property type="entry name" value="Znf_RING"/>
</dbReference>
<dbReference type="InterPro" id="IPR013083">
    <property type="entry name" value="Znf_RING/FYVE/PHD"/>
</dbReference>
<dbReference type="PANTHER" id="PTHR22937:SF147">
    <property type="entry name" value="E3 UBIQUITIN-PROTEIN LIGASE RHG1A-RELATED"/>
    <property type="match status" value="1"/>
</dbReference>
<dbReference type="PANTHER" id="PTHR22937">
    <property type="entry name" value="E3 UBIQUITIN-PROTEIN LIGASE RNF165"/>
    <property type="match status" value="1"/>
</dbReference>
<dbReference type="Pfam" id="PF13639">
    <property type="entry name" value="zf-RING_2"/>
    <property type="match status" value="1"/>
</dbReference>
<dbReference type="SMART" id="SM00184">
    <property type="entry name" value="RING"/>
    <property type="match status" value="1"/>
</dbReference>
<dbReference type="SUPFAM" id="SSF57850">
    <property type="entry name" value="RING/U-box"/>
    <property type="match status" value="1"/>
</dbReference>
<dbReference type="PROSITE" id="PS50089">
    <property type="entry name" value="ZF_RING_2"/>
    <property type="match status" value="1"/>
</dbReference>
<reference key="1">
    <citation type="journal article" date="1997" name="DNA Res.">
        <title>Structural analysis of Arabidopsis thaliana chromosome 5. III. Sequence features of the regions of 1,191,918 bp covered by seventeen physically assigned P1 clones.</title>
        <authorList>
            <person name="Nakamura Y."/>
            <person name="Sato S."/>
            <person name="Kaneko T."/>
            <person name="Kotani H."/>
            <person name="Asamizu E."/>
            <person name="Miyajima N."/>
            <person name="Tabata S."/>
        </authorList>
    </citation>
    <scope>NUCLEOTIDE SEQUENCE [LARGE SCALE GENOMIC DNA]</scope>
    <source>
        <strain>cv. Columbia</strain>
    </source>
</reference>
<reference key="2">
    <citation type="journal article" date="2017" name="Plant J.">
        <title>Araport11: a complete reannotation of the Arabidopsis thaliana reference genome.</title>
        <authorList>
            <person name="Cheng C.Y."/>
            <person name="Krishnakumar V."/>
            <person name="Chan A.P."/>
            <person name="Thibaud-Nissen F."/>
            <person name="Schobel S."/>
            <person name="Town C.D."/>
        </authorList>
    </citation>
    <scope>GENOME REANNOTATION</scope>
    <source>
        <strain>cv. Columbia</strain>
    </source>
</reference>
<reference key="3">
    <citation type="journal article" date="2003" name="Science">
        <title>Empirical analysis of transcriptional activity in the Arabidopsis genome.</title>
        <authorList>
            <person name="Yamada K."/>
            <person name="Lim J."/>
            <person name="Dale J.M."/>
            <person name="Chen H."/>
            <person name="Shinn P."/>
            <person name="Palm C.J."/>
            <person name="Southwick A.M."/>
            <person name="Wu H.C."/>
            <person name="Kim C.J."/>
            <person name="Nguyen M."/>
            <person name="Pham P.K."/>
            <person name="Cheuk R.F."/>
            <person name="Karlin-Newmann G."/>
            <person name="Liu S.X."/>
            <person name="Lam B."/>
            <person name="Sakano H."/>
            <person name="Wu T."/>
            <person name="Yu G."/>
            <person name="Miranda M."/>
            <person name="Quach H.L."/>
            <person name="Tripp M."/>
            <person name="Chang C.H."/>
            <person name="Lee J.M."/>
            <person name="Toriumi M.J."/>
            <person name="Chan M.M."/>
            <person name="Tang C.C."/>
            <person name="Onodera C.S."/>
            <person name="Deng J.M."/>
            <person name="Akiyama K."/>
            <person name="Ansari Y."/>
            <person name="Arakawa T."/>
            <person name="Banh J."/>
            <person name="Banno F."/>
            <person name="Bowser L."/>
            <person name="Brooks S.Y."/>
            <person name="Carninci P."/>
            <person name="Chao Q."/>
            <person name="Choy N."/>
            <person name="Enju A."/>
            <person name="Goldsmith A.D."/>
            <person name="Gurjal M."/>
            <person name="Hansen N.F."/>
            <person name="Hayashizaki Y."/>
            <person name="Johnson-Hopson C."/>
            <person name="Hsuan V.W."/>
            <person name="Iida K."/>
            <person name="Karnes M."/>
            <person name="Khan S."/>
            <person name="Koesema E."/>
            <person name="Ishida J."/>
            <person name="Jiang P.X."/>
            <person name="Jones T."/>
            <person name="Kawai J."/>
            <person name="Kamiya A."/>
            <person name="Meyers C."/>
            <person name="Nakajima M."/>
            <person name="Narusaka M."/>
            <person name="Seki M."/>
            <person name="Sakurai T."/>
            <person name="Satou M."/>
            <person name="Tamse R."/>
            <person name="Vaysberg M."/>
            <person name="Wallender E.K."/>
            <person name="Wong C."/>
            <person name="Yamamura Y."/>
            <person name="Yuan S."/>
            <person name="Shinozaki K."/>
            <person name="Davis R.W."/>
            <person name="Theologis A."/>
            <person name="Ecker J.R."/>
        </authorList>
    </citation>
    <scope>NUCLEOTIDE SEQUENCE [LARGE SCALE MRNA]</scope>
    <source>
        <strain>cv. Columbia</strain>
    </source>
</reference>
<reference key="4">
    <citation type="journal article" date="2009" name="DNA Res.">
        <title>Analysis of multiple occurrences of alternative splicing events in Arabidopsis thaliana using novel sequenced full-length cDNAs.</title>
        <authorList>
            <person name="Iida K."/>
            <person name="Fukami-Kobayashi K."/>
            <person name="Toyoda A."/>
            <person name="Sakaki Y."/>
            <person name="Kobayashi M."/>
            <person name="Seki M."/>
            <person name="Shinozaki K."/>
        </authorList>
    </citation>
    <scope>NUCLEOTIDE SEQUENCE [LARGE SCALE MRNA]</scope>
    <source>
        <strain>cv. Columbia</strain>
    </source>
</reference>
<reference key="5">
    <citation type="journal article" date="1998" name="FEBS Lett.">
        <title>Widespread occurrence of a highly conserved RING-H2 zinc finger motif in the model plant Arabidopsis thaliana.</title>
        <authorList>
            <person name="Jensen R.B."/>
            <person name="Jensen K.L."/>
            <person name="Jespersen H.M."/>
            <person name="Skriver K."/>
        </authorList>
    </citation>
    <scope>NUCLEOTIDE SEQUENCE [LARGE SCALE MRNA] OF 502-691</scope>
    <scope>TISSUE SPECIFICITY</scope>
    <source>
        <strain>cv. Columbia</strain>
    </source>
</reference>
<comment type="function">
    <text evidence="1">Probable E3 ubiquitin-protein ligase that may possess E3 ubiquitin ligase activity in vitro.</text>
</comment>
<comment type="catalytic activity">
    <reaction>
        <text>S-ubiquitinyl-[E2 ubiquitin-conjugating enzyme]-L-cysteine + [acceptor protein]-L-lysine = [E2 ubiquitin-conjugating enzyme]-L-cysteine + N(6)-ubiquitinyl-[acceptor protein]-L-lysine.</text>
        <dbReference type="EC" id="2.3.2.27"/>
    </reaction>
</comment>
<comment type="pathway">
    <text evidence="6">Protein modification; protein ubiquitination.</text>
</comment>
<comment type="tissue specificity">
    <text evidence="4">Expressed in stems, flowers, green siliques, cauline leaves, seeds and roots.</text>
</comment>
<proteinExistence type="evidence at transcript level"/>
<evidence type="ECO:0000250" key="1">
    <source>
        <dbReference type="UniProtKB" id="Q9ZT50"/>
    </source>
</evidence>
<evidence type="ECO:0000255" key="2">
    <source>
        <dbReference type="PROSITE-ProRule" id="PRU00175"/>
    </source>
</evidence>
<evidence type="ECO:0000256" key="3">
    <source>
        <dbReference type="SAM" id="MobiDB-lite"/>
    </source>
</evidence>
<evidence type="ECO:0000269" key="4">
    <source>
    </source>
</evidence>
<evidence type="ECO:0000303" key="5">
    <source>
    </source>
</evidence>
<evidence type="ECO:0000305" key="6"/>
<evidence type="ECO:0000312" key="7">
    <source>
        <dbReference type="Araport" id="AT5G42940"/>
    </source>
</evidence>
<evidence type="ECO:0000312" key="8">
    <source>
        <dbReference type="EMBL" id="BAB09196.1"/>
    </source>
</evidence>
<feature type="chain" id="PRO_0000436417" description="Probable E3 ubiquitin-protein ligase RHG1A">
    <location>
        <begin position="1"/>
        <end position="691"/>
    </location>
</feature>
<feature type="zinc finger region" description="RING-type; atypical" evidence="2">
    <location>
        <begin position="637"/>
        <end position="678"/>
    </location>
</feature>
<feature type="region of interest" description="Disordered" evidence="3">
    <location>
        <begin position="71"/>
        <end position="91"/>
    </location>
</feature>
<feature type="region of interest" description="Disordered" evidence="3">
    <location>
        <begin position="151"/>
        <end position="235"/>
    </location>
</feature>
<feature type="region of interest" description="Disordered" evidence="3">
    <location>
        <begin position="316"/>
        <end position="336"/>
    </location>
</feature>
<feature type="region of interest" description="Disordered" evidence="3">
    <location>
        <begin position="349"/>
        <end position="373"/>
    </location>
</feature>
<feature type="region of interest" description="Disordered" evidence="3">
    <location>
        <begin position="395"/>
        <end position="501"/>
    </location>
</feature>
<feature type="compositionally biased region" description="Basic and acidic residues" evidence="3">
    <location>
        <begin position="80"/>
        <end position="91"/>
    </location>
</feature>
<feature type="compositionally biased region" description="Polar residues" evidence="3">
    <location>
        <begin position="204"/>
        <end position="213"/>
    </location>
</feature>
<feature type="compositionally biased region" description="Polar residues" evidence="3">
    <location>
        <begin position="317"/>
        <end position="328"/>
    </location>
</feature>
<feature type="compositionally biased region" description="Basic and acidic residues" evidence="3">
    <location>
        <begin position="361"/>
        <end position="370"/>
    </location>
</feature>
<feature type="compositionally biased region" description="Polar residues" evidence="3">
    <location>
        <begin position="395"/>
        <end position="406"/>
    </location>
</feature>
<feature type="compositionally biased region" description="Low complexity" evidence="3">
    <location>
        <begin position="407"/>
        <end position="419"/>
    </location>
</feature>
<feature type="compositionally biased region" description="Polar residues" evidence="3">
    <location>
        <begin position="429"/>
        <end position="440"/>
    </location>
</feature>
<feature type="compositionally biased region" description="Low complexity" evidence="3">
    <location>
        <begin position="454"/>
        <end position="465"/>
    </location>
</feature>
<feature type="sequence conflict" description="In Ref. 5; AAC69857." evidence="6" ref="5">
    <original>K</original>
    <variation>E</variation>
    <location>
        <position position="665"/>
    </location>
</feature>
<sequence length="691" mass="75284">MQGERASLGYLSEALNFEHGSSSSNGVIDHWENIHSLGDNDLQDYMIANSESNTSLANSVYHEQQGLRRFSLGEASSSGTKDEASSHNEQRMETRCFDGRGNEIIDLDPVFAQPSGTNQPVQNVNLNAEYIEIHEDINPYRGRSGFIEANGPGTRVSQPGRSFEENGVGTGSSVEGRRASCKRKALEGSISQSSSGGYHDFQRGESSSWTPGSTVFRPGNGLNISGSLDNGPRGMVSGTVPNFPVSAPNFPVSAIAESSSRNICVRSNPSDHQETVNPSTFAAGTVVRRPVPPSQLNLSRHLPADQHSLDLRPGQSFVVSRNPNSTPVSIPPGSRTMLPPFRWTGSSLVGGTSNSTAPVERNLHLDETRSRSIPGNTLEIPMFAAPEVGNFARSQSSRNVTNGNLNSASSVSRTGSTTSVPPPPPPSSNLAWTSYQNSPHYQRRRTERSELARRSLLSSLAADATNQRSGDHPTLRSLAPPASSDGLVLQPGGDNSQMHNRAYSRAGPLFDRQGDSVVGIPHPLRALAAASRGRSRLMVSQMQNVLDVMRRDANNNNLRLEDVMLLNHSVLFDGATGHDRYRDMRLDVDNMSYEELLALEERIGDVCTGVNEETISNRLKQRKYKSNTKSPQDAEPCCVCQEEYTEGEDMGTLECGHEFHSQCIKEWLKQKNLCPICKTTGLNTAKKRRIA</sequence>
<keyword id="KW-0479">Metal-binding</keyword>
<keyword id="KW-1185">Reference proteome</keyword>
<keyword id="KW-0808">Transferase</keyword>
<keyword id="KW-0833">Ubl conjugation pathway</keyword>
<keyword id="KW-0862">Zinc</keyword>
<keyword id="KW-0863">Zinc-finger</keyword>
<protein>
    <recommendedName>
        <fullName evidence="6">Probable E3 ubiquitin-protein ligase RHG1A</fullName>
        <ecNumber>2.3.2.27</ecNumber>
    </recommendedName>
    <alternativeName>
        <fullName evidence="5">RING-H2 finger G1a</fullName>
    </alternativeName>
    <alternativeName>
        <fullName evidence="6">RING-H2 zinc finger protein RHG1a</fullName>
    </alternativeName>
    <alternativeName>
        <fullName evidence="6">RING-type E3 ubiquitin transferase RHG1A</fullName>
    </alternativeName>
</protein>
<name>RHG1A_ARATH</name>
<accession>Q9FMM4</accession>
<accession>Q9ZT41</accession>
<gene>
    <name evidence="5" type="primary">RHG1A</name>
    <name evidence="7" type="ordered locus">At5g42940</name>
    <name evidence="8" type="ORF">MBD2.14</name>
</gene>
<organism>
    <name type="scientific">Arabidopsis thaliana</name>
    <name type="common">Mouse-ear cress</name>
    <dbReference type="NCBI Taxonomy" id="3702"/>
    <lineage>
        <taxon>Eukaryota</taxon>
        <taxon>Viridiplantae</taxon>
        <taxon>Streptophyta</taxon>
        <taxon>Embryophyta</taxon>
        <taxon>Tracheophyta</taxon>
        <taxon>Spermatophyta</taxon>
        <taxon>Magnoliopsida</taxon>
        <taxon>eudicotyledons</taxon>
        <taxon>Gunneridae</taxon>
        <taxon>Pentapetalae</taxon>
        <taxon>rosids</taxon>
        <taxon>malvids</taxon>
        <taxon>Brassicales</taxon>
        <taxon>Brassicaceae</taxon>
        <taxon>Camelineae</taxon>
        <taxon>Arabidopsis</taxon>
    </lineage>
</organism>